<name>GLCC_ECOL6</name>
<keyword id="KW-0010">Activator</keyword>
<keyword id="KW-0238">DNA-binding</keyword>
<keyword id="KW-1185">Reference proteome</keyword>
<keyword id="KW-0678">Repressor</keyword>
<keyword id="KW-0804">Transcription</keyword>
<keyword id="KW-0805">Transcription regulation</keyword>
<protein>
    <recommendedName>
        <fullName evidence="1">Glc operon transcriptional activator</fullName>
    </recommendedName>
    <alternativeName>
        <fullName evidence="1">Glc regulatory protein</fullName>
    </alternativeName>
    <alternativeName>
        <fullName>HTH-type transcriptional regulator GlcC</fullName>
    </alternativeName>
</protein>
<proteinExistence type="inferred from homology"/>
<feature type="chain" id="PRO_0000050646" description="Glc operon transcriptional activator">
    <location>
        <begin position="1"/>
        <end position="254"/>
    </location>
</feature>
<feature type="domain" description="HTH gntR-type" evidence="2">
    <location>
        <begin position="6"/>
        <end position="74"/>
    </location>
</feature>
<feature type="DNA-binding region" description="H-T-H motif" evidence="2">
    <location>
        <begin position="34"/>
        <end position="53"/>
    </location>
</feature>
<comment type="function">
    <text evidence="1">Transcriptional activator of the glcDEFGB operon which is associated with glycolate utilization, and encodes malate synthase G and the genes needed for glycolate oxidase activity. Also negatively regulates the transcription of its own gene. Glycolate acts as an effector, but GlcC can also use acetate as an alternative effector.</text>
</comment>
<comment type="sequence caution" evidence="3">
    <conflict type="erroneous initiation">
        <sequence resource="EMBL-CDS" id="AAN82154"/>
    </conflict>
</comment>
<evidence type="ECO:0000250" key="1">
    <source>
        <dbReference type="UniProtKB" id="P0ACL5"/>
    </source>
</evidence>
<evidence type="ECO:0000255" key="2">
    <source>
        <dbReference type="PROSITE-ProRule" id="PRU00307"/>
    </source>
</evidence>
<evidence type="ECO:0000305" key="3"/>
<dbReference type="EMBL" id="AE014075">
    <property type="protein sequence ID" value="AAN82154.1"/>
    <property type="status" value="ALT_INIT"/>
    <property type="molecule type" value="Genomic_DNA"/>
</dbReference>
<dbReference type="RefSeq" id="WP_001297764.1">
    <property type="nucleotide sequence ID" value="NZ_CP051263.1"/>
</dbReference>
<dbReference type="SMR" id="P0ACL6"/>
<dbReference type="STRING" id="199310.c3710"/>
<dbReference type="GeneID" id="75205188"/>
<dbReference type="KEGG" id="ecc:c3710"/>
<dbReference type="eggNOG" id="COG2186">
    <property type="taxonomic scope" value="Bacteria"/>
</dbReference>
<dbReference type="HOGENOM" id="CLU_017584_9_1_6"/>
<dbReference type="Proteomes" id="UP000001410">
    <property type="component" value="Chromosome"/>
</dbReference>
<dbReference type="GO" id="GO:0003677">
    <property type="term" value="F:DNA binding"/>
    <property type="evidence" value="ECO:0007669"/>
    <property type="project" value="UniProtKB-KW"/>
</dbReference>
<dbReference type="GO" id="GO:0003700">
    <property type="term" value="F:DNA-binding transcription factor activity"/>
    <property type="evidence" value="ECO:0007669"/>
    <property type="project" value="InterPro"/>
</dbReference>
<dbReference type="CDD" id="cd07377">
    <property type="entry name" value="WHTH_GntR"/>
    <property type="match status" value="1"/>
</dbReference>
<dbReference type="FunFam" id="1.10.10.10:FF:000338">
    <property type="entry name" value="Glc operon transcriptional activator"/>
    <property type="match status" value="1"/>
</dbReference>
<dbReference type="FunFam" id="1.20.120.530:FF:000010">
    <property type="entry name" value="Glc operon transcriptional activator"/>
    <property type="match status" value="1"/>
</dbReference>
<dbReference type="Gene3D" id="1.20.120.530">
    <property type="entry name" value="GntR ligand-binding domain-like"/>
    <property type="match status" value="1"/>
</dbReference>
<dbReference type="Gene3D" id="1.10.10.10">
    <property type="entry name" value="Winged helix-like DNA-binding domain superfamily/Winged helix DNA-binding domain"/>
    <property type="match status" value="1"/>
</dbReference>
<dbReference type="InterPro" id="IPR011711">
    <property type="entry name" value="GntR_C"/>
</dbReference>
<dbReference type="InterPro" id="IPR008920">
    <property type="entry name" value="TF_FadR/GntR_C"/>
</dbReference>
<dbReference type="InterPro" id="IPR000524">
    <property type="entry name" value="Tscrpt_reg_HTH_GntR"/>
</dbReference>
<dbReference type="InterPro" id="IPR036388">
    <property type="entry name" value="WH-like_DNA-bd_sf"/>
</dbReference>
<dbReference type="InterPro" id="IPR036390">
    <property type="entry name" value="WH_DNA-bd_sf"/>
</dbReference>
<dbReference type="NCBIfam" id="NF007442">
    <property type="entry name" value="PRK09990.1"/>
    <property type="match status" value="1"/>
</dbReference>
<dbReference type="PANTHER" id="PTHR43537:SF1">
    <property type="entry name" value="GLC OPERON TRANSCRIPTIONAL ACTIVATOR"/>
    <property type="match status" value="1"/>
</dbReference>
<dbReference type="PANTHER" id="PTHR43537">
    <property type="entry name" value="TRANSCRIPTIONAL REGULATOR, GNTR FAMILY"/>
    <property type="match status" value="1"/>
</dbReference>
<dbReference type="Pfam" id="PF07729">
    <property type="entry name" value="FCD"/>
    <property type="match status" value="1"/>
</dbReference>
<dbReference type="Pfam" id="PF00392">
    <property type="entry name" value="GntR"/>
    <property type="match status" value="1"/>
</dbReference>
<dbReference type="PRINTS" id="PR00035">
    <property type="entry name" value="HTHGNTR"/>
</dbReference>
<dbReference type="SMART" id="SM00895">
    <property type="entry name" value="FCD"/>
    <property type="match status" value="1"/>
</dbReference>
<dbReference type="SMART" id="SM00345">
    <property type="entry name" value="HTH_GNTR"/>
    <property type="match status" value="1"/>
</dbReference>
<dbReference type="SUPFAM" id="SSF48008">
    <property type="entry name" value="GntR ligand-binding domain-like"/>
    <property type="match status" value="1"/>
</dbReference>
<dbReference type="SUPFAM" id="SSF46785">
    <property type="entry name" value="Winged helix' DNA-binding domain"/>
    <property type="match status" value="1"/>
</dbReference>
<dbReference type="PROSITE" id="PS50949">
    <property type="entry name" value="HTH_GNTR"/>
    <property type="match status" value="1"/>
</dbReference>
<reference key="1">
    <citation type="journal article" date="2002" name="Proc. Natl. Acad. Sci. U.S.A.">
        <title>Extensive mosaic structure revealed by the complete genome sequence of uropathogenic Escherichia coli.</title>
        <authorList>
            <person name="Welch R.A."/>
            <person name="Burland V."/>
            <person name="Plunkett G. III"/>
            <person name="Redford P."/>
            <person name="Roesch P."/>
            <person name="Rasko D."/>
            <person name="Buckles E.L."/>
            <person name="Liou S.-R."/>
            <person name="Boutin A."/>
            <person name="Hackett J."/>
            <person name="Stroud D."/>
            <person name="Mayhew G.F."/>
            <person name="Rose D.J."/>
            <person name="Zhou S."/>
            <person name="Schwartz D.C."/>
            <person name="Perna N.T."/>
            <person name="Mobley H.L.T."/>
            <person name="Donnenberg M.S."/>
            <person name="Blattner F.R."/>
        </authorList>
    </citation>
    <scope>NUCLEOTIDE SEQUENCE [LARGE SCALE GENOMIC DNA]</scope>
    <source>
        <strain>CFT073 / ATCC 700928 / UPEC</strain>
    </source>
</reference>
<gene>
    <name type="primary">glcC</name>
    <name type="ordered locus">c3710</name>
</gene>
<sequence length="254" mass="28826">MKDERRPICEVVAESIERLIIDGVLKVGQPLPSERRLCEKLGFSRSALREGLTVLRGRGIIETAQGRDSRVARLNRVQDTSPLIHLFSTQPRTLYDLLDVRALLEGESARLAATLGTQADFVVITRCYEKMLAASENNKEISLIEHAQLDHAFHLAICQASHNQVLVFTLQSLTDLMFNSVFASVNNLYHRPQQKKQIDRQHARIYNAVLQRLPHVAQRAARDHVRTVKKNLHDIELEGHHLIRSAVPLEMNLS</sequence>
<organism>
    <name type="scientific">Escherichia coli O6:H1 (strain CFT073 / ATCC 700928 / UPEC)</name>
    <dbReference type="NCBI Taxonomy" id="199310"/>
    <lineage>
        <taxon>Bacteria</taxon>
        <taxon>Pseudomonadati</taxon>
        <taxon>Pseudomonadota</taxon>
        <taxon>Gammaproteobacteria</taxon>
        <taxon>Enterobacterales</taxon>
        <taxon>Enterobacteriaceae</taxon>
        <taxon>Escherichia</taxon>
    </lineage>
</organism>
<accession>P0ACL6</accession>
<accession>P52072</accession>